<proteinExistence type="evidence at protein level"/>
<dbReference type="EMBL" id="D13173">
    <property type="protein sequence ID" value="BAA02462.1"/>
    <property type="molecule type" value="Genomic_DNA"/>
</dbReference>
<dbReference type="EMBL" id="BA000039">
    <property type="protein sequence ID" value="BAC09516.1"/>
    <property type="molecule type" value="Genomic_DNA"/>
</dbReference>
<dbReference type="RefSeq" id="NP_682754.1">
    <property type="nucleotide sequence ID" value="NC_004113.1"/>
</dbReference>
<dbReference type="RefSeq" id="WP_011057799.1">
    <property type="nucleotide sequence ID" value="NC_004113.1"/>
</dbReference>
<dbReference type="PDB" id="7VEB">
    <property type="method" value="EM"/>
    <property type="resolution" value="4.20 A"/>
    <property type="chains" value="a=1-246"/>
</dbReference>
<dbReference type="PDBsum" id="7VEB"/>
<dbReference type="EMDB" id="EMD-31945"/>
<dbReference type="SMR" id="P50040"/>
<dbReference type="STRING" id="197221.gene:10748571"/>
<dbReference type="EnsemblBacteria" id="BAC09516">
    <property type="protein sequence ID" value="BAC09516"/>
    <property type="gene ID" value="BAC09516"/>
</dbReference>
<dbReference type="KEGG" id="tel:tlr1964"/>
<dbReference type="PATRIC" id="fig|197221.4.peg.2054"/>
<dbReference type="eggNOG" id="COG0448">
    <property type="taxonomic scope" value="Bacteria"/>
</dbReference>
<dbReference type="Proteomes" id="UP000000440">
    <property type="component" value="Chromosome"/>
</dbReference>
<dbReference type="GO" id="GO:0030089">
    <property type="term" value="C:phycobilisome"/>
    <property type="evidence" value="ECO:0007669"/>
    <property type="project" value="UniProtKB-KW"/>
</dbReference>
<dbReference type="GO" id="GO:0031676">
    <property type="term" value="C:plasma membrane-derived thylakoid membrane"/>
    <property type="evidence" value="ECO:0007669"/>
    <property type="project" value="UniProtKB-SubCell"/>
</dbReference>
<dbReference type="GO" id="GO:0015979">
    <property type="term" value="P:photosynthesis"/>
    <property type="evidence" value="ECO:0007669"/>
    <property type="project" value="UniProtKB-KW"/>
</dbReference>
<dbReference type="Gene3D" id="1.10.3130.20">
    <property type="entry name" value="Phycobilisome linker domain"/>
    <property type="match status" value="1"/>
</dbReference>
<dbReference type="InterPro" id="IPR001297">
    <property type="entry name" value="PBS_linker_dom"/>
</dbReference>
<dbReference type="InterPro" id="IPR038255">
    <property type="entry name" value="PBS_linker_sf"/>
</dbReference>
<dbReference type="PANTHER" id="PTHR34011">
    <property type="entry name" value="PHYCOBILISOME 32.1 KDA LINKER POLYPEPTIDE, PHYCOCYANIN-ASSOCIATED, ROD 2-RELATED"/>
    <property type="match status" value="1"/>
</dbReference>
<dbReference type="Pfam" id="PF00427">
    <property type="entry name" value="PBS_linker_poly"/>
    <property type="match status" value="1"/>
</dbReference>
<dbReference type="PROSITE" id="PS51445">
    <property type="entry name" value="PBS_LINKER"/>
    <property type="match status" value="1"/>
</dbReference>
<gene>
    <name type="primary">cpcG2</name>
    <name type="ordered locus">tlr1964</name>
</gene>
<reference key="1">
    <citation type="submission" date="1992-09" db="EMBL/GenBank/DDBJ databases">
        <title>Cloning and sequencing of the phycocyanin operon from the thermophilic cyanobacterium Synechococcus elongatus.</title>
        <authorList>
            <person name="Shimazu T."/>
            <person name="Soga M."/>
            <person name="Hirano M."/>
            <person name="Katoh S."/>
        </authorList>
    </citation>
    <scope>NUCLEOTIDE SEQUENCE [GENOMIC DNA]</scope>
</reference>
<reference key="2">
    <citation type="journal article" date="2002" name="DNA Res.">
        <title>Complete genome structure of the thermophilic cyanobacterium Thermosynechococcus elongatus BP-1.</title>
        <authorList>
            <person name="Nakamura Y."/>
            <person name="Kaneko T."/>
            <person name="Sato S."/>
            <person name="Ikeuchi M."/>
            <person name="Katoh H."/>
            <person name="Sasamoto S."/>
            <person name="Watanabe A."/>
            <person name="Iriguchi M."/>
            <person name="Kawashima K."/>
            <person name="Kimura T."/>
            <person name="Kishida Y."/>
            <person name="Kiyokawa C."/>
            <person name="Kohara M."/>
            <person name="Matsumoto M."/>
            <person name="Matsuno A."/>
            <person name="Nakazaki N."/>
            <person name="Shimpo S."/>
            <person name="Sugimoto M."/>
            <person name="Takeuchi C."/>
            <person name="Yamada M."/>
            <person name="Tabata S."/>
        </authorList>
    </citation>
    <scope>NUCLEOTIDE SEQUENCE [LARGE SCALE GENOMIC DNA]</scope>
    <source>
        <strain>NIES-2133 / IAM M-273 / BP-1</strain>
    </source>
</reference>
<evidence type="ECO:0000250" key="1"/>
<evidence type="ECO:0000255" key="2">
    <source>
        <dbReference type="PROSITE-ProRule" id="PRU00775"/>
    </source>
</evidence>
<evidence type="ECO:0000256" key="3">
    <source>
        <dbReference type="SAM" id="MobiDB-lite"/>
    </source>
</evidence>
<organism>
    <name type="scientific">Thermosynechococcus vestitus (strain NIES-2133 / IAM M-273 / BP-1)</name>
    <dbReference type="NCBI Taxonomy" id="197221"/>
    <lineage>
        <taxon>Bacteria</taxon>
        <taxon>Bacillati</taxon>
        <taxon>Cyanobacteriota</taxon>
        <taxon>Cyanophyceae</taxon>
        <taxon>Acaryochloridales</taxon>
        <taxon>Thermosynechococcaceae</taxon>
        <taxon>Thermosynechococcus</taxon>
    </lineage>
</organism>
<name>PYG2_THEVB</name>
<keyword id="KW-0002">3D-structure</keyword>
<keyword id="KW-0042">Antenna complex</keyword>
<keyword id="KW-0472">Membrane</keyword>
<keyword id="KW-0602">Photosynthesis</keyword>
<keyword id="KW-0605">Phycobilisome</keyword>
<keyword id="KW-1185">Reference proteome</keyword>
<keyword id="KW-0793">Thylakoid</keyword>
<accession>P50040</accession>
<feature type="initiator methionine" description="Removed" evidence="1">
    <location>
        <position position="1"/>
    </location>
</feature>
<feature type="chain" id="PRO_0000199254" description="Phycobilisome rod-core linker polypeptide CpcG2">
    <location>
        <begin position="2"/>
        <end position="246"/>
    </location>
</feature>
<feature type="domain" description="PBS-linker" evidence="2">
    <location>
        <begin position="11"/>
        <end position="189"/>
    </location>
</feature>
<feature type="region of interest" description="Disordered" evidence="3">
    <location>
        <begin position="224"/>
        <end position="246"/>
    </location>
</feature>
<feature type="compositionally biased region" description="Polar residues" evidence="3">
    <location>
        <begin position="235"/>
        <end position="246"/>
    </location>
</feature>
<comment type="function">
    <text evidence="1">Rod-core linker protein required for attachment of phycocyanin to allophycocyanin in cores of phycobilisomes.</text>
</comment>
<comment type="function">
    <text evidence="1">Linker polypeptides determine the state of aggregation and the location of the disk-shaped phycobiliprotein units within the phycobilisome and modulate their spectroscopic properties in order to mediate a directed and optimal energy transfer.</text>
</comment>
<comment type="subunit">
    <text evidence="1">The phycobilisome is a hemidiscoidal structure that is composed of two distinct substructures: a core complex and a number of rods radiating from the core.</text>
</comment>
<comment type="subcellular location">
    <subcellularLocation>
        <location evidence="1">Cellular thylakoid membrane</location>
        <topology evidence="1">Peripheral membrane protein</topology>
        <orientation evidence="1">Cytoplasmic side</orientation>
    </subcellularLocation>
</comment>
<comment type="similarity">
    <text evidence="2">Belongs to the phycobilisome linker protein family.</text>
</comment>
<protein>
    <recommendedName>
        <fullName>Phycobilisome rod-core linker polypeptide CpcG2</fullName>
    </recommendedName>
</protein>
<sequence>MTIPLLSYAPSSQNQRVAGYEVPNEETPWRYSLEDAVDQSDIDELIWAAYRQVFSEHVVLKSTRQPHLESQLANRAISVRDFIRGLAKSETFRRLVVETNSNYRLVEIALKRLLGRAPYNKQEELAWSIRIATDGWQKFVDTLVDSDEYTQNFGDNTVPYQRRRYKDRPFNLVTPRYSDYWRDKLENSRYKWGDIRNFLEMARSVKVTPVQFKPVSTANVQIPDTTRRDRPTVPASINPTASFPLR</sequence>